<name>CYSI_BUCA5</name>
<proteinExistence type="inferred from homology"/>
<accession>B8D9K5</accession>
<reference key="1">
    <citation type="journal article" date="2009" name="Science">
        <title>The dynamics and time scale of ongoing genomic erosion in symbiotic bacteria.</title>
        <authorList>
            <person name="Moran N.A."/>
            <person name="McLaughlin H.J."/>
            <person name="Sorek R."/>
        </authorList>
    </citation>
    <scope>NUCLEOTIDE SEQUENCE [LARGE SCALE GENOMIC DNA]</scope>
    <source>
        <strain>5A</strain>
    </source>
</reference>
<dbReference type="EC" id="1.8.1.2" evidence="1"/>
<dbReference type="EMBL" id="CP001161">
    <property type="protein sequence ID" value="ACL30776.1"/>
    <property type="molecule type" value="Genomic_DNA"/>
</dbReference>
<dbReference type="RefSeq" id="WP_009874380.1">
    <property type="nucleotide sequence ID" value="NC_011833.1"/>
</dbReference>
<dbReference type="SMR" id="B8D9K5"/>
<dbReference type="KEGG" id="bap:BUAP5A_420"/>
<dbReference type="HOGENOM" id="CLU_001975_3_2_6"/>
<dbReference type="OrthoDB" id="3189055at2"/>
<dbReference type="UniPathway" id="UPA00140">
    <property type="reaction ID" value="UER00207"/>
</dbReference>
<dbReference type="Proteomes" id="UP000006904">
    <property type="component" value="Chromosome"/>
</dbReference>
<dbReference type="GO" id="GO:0009337">
    <property type="term" value="C:sulfite reductase complex (NADPH)"/>
    <property type="evidence" value="ECO:0007669"/>
    <property type="project" value="InterPro"/>
</dbReference>
<dbReference type="GO" id="GO:0051539">
    <property type="term" value="F:4 iron, 4 sulfur cluster binding"/>
    <property type="evidence" value="ECO:0007669"/>
    <property type="project" value="UniProtKB-KW"/>
</dbReference>
<dbReference type="GO" id="GO:0020037">
    <property type="term" value="F:heme binding"/>
    <property type="evidence" value="ECO:0007669"/>
    <property type="project" value="InterPro"/>
</dbReference>
<dbReference type="GO" id="GO:0046872">
    <property type="term" value="F:metal ion binding"/>
    <property type="evidence" value="ECO:0007669"/>
    <property type="project" value="UniProtKB-KW"/>
</dbReference>
<dbReference type="GO" id="GO:0050661">
    <property type="term" value="F:NADP binding"/>
    <property type="evidence" value="ECO:0007669"/>
    <property type="project" value="InterPro"/>
</dbReference>
<dbReference type="GO" id="GO:0050311">
    <property type="term" value="F:sulfite reductase (ferredoxin) activity"/>
    <property type="evidence" value="ECO:0007669"/>
    <property type="project" value="TreeGrafter"/>
</dbReference>
<dbReference type="GO" id="GO:0004783">
    <property type="term" value="F:sulfite reductase (NADPH) activity"/>
    <property type="evidence" value="ECO:0007669"/>
    <property type="project" value="UniProtKB-UniRule"/>
</dbReference>
<dbReference type="GO" id="GO:0019344">
    <property type="term" value="P:cysteine biosynthetic process"/>
    <property type="evidence" value="ECO:0007669"/>
    <property type="project" value="UniProtKB-KW"/>
</dbReference>
<dbReference type="GO" id="GO:0070814">
    <property type="term" value="P:hydrogen sulfide biosynthetic process"/>
    <property type="evidence" value="ECO:0007669"/>
    <property type="project" value="UniProtKB-UniRule"/>
</dbReference>
<dbReference type="GO" id="GO:0000103">
    <property type="term" value="P:sulfate assimilation"/>
    <property type="evidence" value="ECO:0007669"/>
    <property type="project" value="UniProtKB-UniRule"/>
</dbReference>
<dbReference type="FunFam" id="3.30.413.10:FF:000003">
    <property type="entry name" value="Sulfite reductase [NADPH] hemoprotein beta-component"/>
    <property type="match status" value="1"/>
</dbReference>
<dbReference type="FunFam" id="3.30.413.10:FF:000004">
    <property type="entry name" value="Sulfite reductase [NADPH] hemoprotein beta-component"/>
    <property type="match status" value="1"/>
</dbReference>
<dbReference type="Gene3D" id="3.30.413.10">
    <property type="entry name" value="Sulfite Reductase Hemoprotein, domain 1"/>
    <property type="match status" value="2"/>
</dbReference>
<dbReference type="HAMAP" id="MF_01540">
    <property type="entry name" value="CysI"/>
    <property type="match status" value="1"/>
</dbReference>
<dbReference type="InterPro" id="IPR011786">
    <property type="entry name" value="CysI"/>
</dbReference>
<dbReference type="InterPro" id="IPR005117">
    <property type="entry name" value="NiRdtase/SiRdtase_haem-b_fer"/>
</dbReference>
<dbReference type="InterPro" id="IPR036136">
    <property type="entry name" value="Nit/Sulf_reduc_fer-like_dom_sf"/>
</dbReference>
<dbReference type="InterPro" id="IPR006067">
    <property type="entry name" value="NO2/SO3_Rdtase_4Fe4S_dom"/>
</dbReference>
<dbReference type="InterPro" id="IPR045169">
    <property type="entry name" value="NO2/SO3_Rdtase_4Fe4S_prot"/>
</dbReference>
<dbReference type="InterPro" id="IPR045854">
    <property type="entry name" value="NO2/SO3_Rdtase_4Fe4S_sf"/>
</dbReference>
<dbReference type="InterPro" id="IPR006066">
    <property type="entry name" value="NO2/SO3_Rdtase_FeS/sirohaem_BS"/>
</dbReference>
<dbReference type="NCBIfam" id="TIGR02041">
    <property type="entry name" value="CysI"/>
    <property type="match status" value="1"/>
</dbReference>
<dbReference type="NCBIfam" id="NF010029">
    <property type="entry name" value="PRK13504.1"/>
    <property type="match status" value="1"/>
</dbReference>
<dbReference type="PANTHER" id="PTHR11493:SF47">
    <property type="entry name" value="SULFITE REDUCTASE [NADPH] SUBUNIT BETA"/>
    <property type="match status" value="1"/>
</dbReference>
<dbReference type="PANTHER" id="PTHR11493">
    <property type="entry name" value="SULFITE REDUCTASE [NADPH] SUBUNIT BETA-RELATED"/>
    <property type="match status" value="1"/>
</dbReference>
<dbReference type="Pfam" id="PF01077">
    <property type="entry name" value="NIR_SIR"/>
    <property type="match status" value="1"/>
</dbReference>
<dbReference type="Pfam" id="PF03460">
    <property type="entry name" value="NIR_SIR_ferr"/>
    <property type="match status" value="2"/>
</dbReference>
<dbReference type="PRINTS" id="PR00397">
    <property type="entry name" value="SIROHAEM"/>
</dbReference>
<dbReference type="SUPFAM" id="SSF56014">
    <property type="entry name" value="Nitrite and sulphite reductase 4Fe-4S domain-like"/>
    <property type="match status" value="2"/>
</dbReference>
<dbReference type="SUPFAM" id="SSF55124">
    <property type="entry name" value="Nitrite/Sulfite reductase N-terminal domain-like"/>
    <property type="match status" value="2"/>
</dbReference>
<dbReference type="PROSITE" id="PS00365">
    <property type="entry name" value="NIR_SIR"/>
    <property type="match status" value="1"/>
</dbReference>
<sequence length="569" mass="65742">MNKKFKKIVTEKKLTDAERIKENSNYLRGTITDDLKNEITNGFTGDNFSLIRFHGMYQQDDRDLRIERNEQKLEPRYAMMLRCRLPGGVIKAKKWLKIDYFASKYTLYGTIRLTNRQTFQFHGILKKNLKDVHKMLHSIGLDSLATANDVNRNVLCTSNPMESLIHQEAYEWARKISNFLLPHTKAYAEIWLDQKKIVTTEKEPILGKTYLPRKFKTTVVIPPYNDVDLYANDMNFVAITKNEKIIGFNILIGGGLSFIHGNKNTWPFLATEIGYISVENTLSIAKAIVTTQRDWGNRTDRANAKTRYTINNFGLNEFKKEIEKRANVNLKPVREYSFISRGDRFGWIKDINNNWSLTLFIQNGRIYDDNDKLFKSGLLKIANIHDGNFRITSNQNIIISEVSEKNKNKIEKIALSSGLINKSTNLRKNSMACVSFPTCPLAMAEAERMLSFFITQLENIMLKYGVEDEVIILRVSGCPNGCGRSLLAEIGLIGKSIGRYNLYIGGNRIGNRIPKIYKENITEQEILIHLKYLIKTWSNERKNKEDFGDFIVRKEFVKEVINPVYDFWS</sequence>
<protein>
    <recommendedName>
        <fullName evidence="1">Sulfite reductase [NADPH] hemoprotein beta-component</fullName>
        <shortName evidence="1">SiR-HP</shortName>
        <shortName evidence="1">SiRHP</shortName>
        <ecNumber evidence="1">1.8.1.2</ecNumber>
    </recommendedName>
</protein>
<keyword id="KW-0004">4Fe-4S</keyword>
<keyword id="KW-0028">Amino-acid biosynthesis</keyword>
<keyword id="KW-0198">Cysteine biosynthesis</keyword>
<keyword id="KW-0349">Heme</keyword>
<keyword id="KW-0408">Iron</keyword>
<keyword id="KW-0411">Iron-sulfur</keyword>
<keyword id="KW-0479">Metal-binding</keyword>
<keyword id="KW-0521">NADP</keyword>
<keyword id="KW-0560">Oxidoreductase</keyword>
<organism>
    <name type="scientific">Buchnera aphidicola subsp. Acyrthosiphon pisum (strain 5A)</name>
    <dbReference type="NCBI Taxonomy" id="563178"/>
    <lineage>
        <taxon>Bacteria</taxon>
        <taxon>Pseudomonadati</taxon>
        <taxon>Pseudomonadota</taxon>
        <taxon>Gammaproteobacteria</taxon>
        <taxon>Enterobacterales</taxon>
        <taxon>Erwiniaceae</taxon>
        <taxon>Buchnera</taxon>
    </lineage>
</organism>
<evidence type="ECO:0000255" key="1">
    <source>
        <dbReference type="HAMAP-Rule" id="MF_01540"/>
    </source>
</evidence>
<gene>
    <name evidence="1" type="primary">cysI</name>
    <name type="ordered locus">BUAP5A_420</name>
</gene>
<comment type="function">
    <text evidence="1">Component of the sulfite reductase complex that catalyzes the 6-electron reduction of sulfite to sulfide. This is one of several activities required for the biosynthesis of L-cysteine from sulfate.</text>
</comment>
<comment type="catalytic activity">
    <reaction evidence="1">
        <text>hydrogen sulfide + 3 NADP(+) + 3 H2O = sulfite + 3 NADPH + 4 H(+)</text>
        <dbReference type="Rhea" id="RHEA:13801"/>
        <dbReference type="ChEBI" id="CHEBI:15377"/>
        <dbReference type="ChEBI" id="CHEBI:15378"/>
        <dbReference type="ChEBI" id="CHEBI:17359"/>
        <dbReference type="ChEBI" id="CHEBI:29919"/>
        <dbReference type="ChEBI" id="CHEBI:57783"/>
        <dbReference type="ChEBI" id="CHEBI:58349"/>
        <dbReference type="EC" id="1.8.1.2"/>
    </reaction>
</comment>
<comment type="cofactor">
    <cofactor evidence="1">
        <name>siroheme</name>
        <dbReference type="ChEBI" id="CHEBI:60052"/>
    </cofactor>
    <text evidence="1">Binds 1 siroheme per subunit.</text>
</comment>
<comment type="cofactor">
    <cofactor evidence="1">
        <name>[4Fe-4S] cluster</name>
        <dbReference type="ChEBI" id="CHEBI:49883"/>
    </cofactor>
    <text evidence="1">Binds 1 [4Fe-4S] cluster per subunit.</text>
</comment>
<comment type="pathway">
    <text evidence="1">Sulfur metabolism; hydrogen sulfide biosynthesis; hydrogen sulfide from sulfite (NADPH route): step 1/1.</text>
</comment>
<comment type="subunit">
    <text evidence="1">Alpha(8)-beta(8). The alpha component is a flavoprotein, the beta component is a hemoprotein.</text>
</comment>
<comment type="similarity">
    <text evidence="1">Belongs to the nitrite and sulfite reductase 4Fe-4S domain family.</text>
</comment>
<feature type="chain" id="PRO_1000185228" description="Sulfite reductase [NADPH] hemoprotein beta-component">
    <location>
        <begin position="1"/>
        <end position="569"/>
    </location>
</feature>
<feature type="binding site" evidence="1">
    <location>
        <position position="433"/>
    </location>
    <ligand>
        <name>[4Fe-4S] cluster</name>
        <dbReference type="ChEBI" id="CHEBI:49883"/>
    </ligand>
</feature>
<feature type="binding site" evidence="1">
    <location>
        <position position="439"/>
    </location>
    <ligand>
        <name>[4Fe-4S] cluster</name>
        <dbReference type="ChEBI" id="CHEBI:49883"/>
    </ligand>
</feature>
<feature type="binding site" evidence="1">
    <location>
        <position position="478"/>
    </location>
    <ligand>
        <name>[4Fe-4S] cluster</name>
        <dbReference type="ChEBI" id="CHEBI:49883"/>
    </ligand>
</feature>
<feature type="binding site" evidence="1">
    <location>
        <position position="482"/>
    </location>
    <ligand>
        <name>[4Fe-4S] cluster</name>
        <dbReference type="ChEBI" id="CHEBI:49883"/>
    </ligand>
</feature>
<feature type="binding site" description="axial binding residue" evidence="1">
    <location>
        <position position="482"/>
    </location>
    <ligand>
        <name>siroheme</name>
        <dbReference type="ChEBI" id="CHEBI:60052"/>
    </ligand>
    <ligandPart>
        <name>Fe</name>
        <dbReference type="ChEBI" id="CHEBI:18248"/>
    </ligandPart>
</feature>